<comment type="catalytic activity">
    <reaction evidence="1">
        <text>L-citrulline + L-aspartate + ATP = 2-(N(omega)-L-arginino)succinate + AMP + diphosphate + H(+)</text>
        <dbReference type="Rhea" id="RHEA:10932"/>
        <dbReference type="ChEBI" id="CHEBI:15378"/>
        <dbReference type="ChEBI" id="CHEBI:29991"/>
        <dbReference type="ChEBI" id="CHEBI:30616"/>
        <dbReference type="ChEBI" id="CHEBI:33019"/>
        <dbReference type="ChEBI" id="CHEBI:57472"/>
        <dbReference type="ChEBI" id="CHEBI:57743"/>
        <dbReference type="ChEBI" id="CHEBI:456215"/>
        <dbReference type="EC" id="6.3.4.5"/>
    </reaction>
</comment>
<comment type="pathway">
    <text evidence="1">Amino-acid biosynthesis; L-arginine biosynthesis; L-arginine from L-ornithine and carbamoyl phosphate: step 2/3.</text>
</comment>
<comment type="subunit">
    <text evidence="1">Homotetramer.</text>
</comment>
<comment type="subcellular location">
    <subcellularLocation>
        <location evidence="1">Cytoplasm</location>
    </subcellularLocation>
</comment>
<comment type="similarity">
    <text evidence="1">Belongs to the argininosuccinate synthase family. Type 1 subfamily.</text>
</comment>
<accession>B5FBP4</accession>
<gene>
    <name evidence="1" type="primary">argG</name>
    <name type="ordered locus">VFMJ11_2416</name>
</gene>
<keyword id="KW-0028">Amino-acid biosynthesis</keyword>
<keyword id="KW-0055">Arginine biosynthesis</keyword>
<keyword id="KW-0067">ATP-binding</keyword>
<keyword id="KW-0963">Cytoplasm</keyword>
<keyword id="KW-0436">Ligase</keyword>
<keyword id="KW-0547">Nucleotide-binding</keyword>
<proteinExistence type="inferred from homology"/>
<dbReference type="EC" id="6.3.4.5" evidence="1"/>
<dbReference type="EMBL" id="CP001139">
    <property type="protein sequence ID" value="ACH66914.1"/>
    <property type="molecule type" value="Genomic_DNA"/>
</dbReference>
<dbReference type="RefSeq" id="WP_012534066.1">
    <property type="nucleotide sequence ID" value="NC_011184.1"/>
</dbReference>
<dbReference type="SMR" id="B5FBP4"/>
<dbReference type="KEGG" id="vfm:VFMJ11_2416"/>
<dbReference type="HOGENOM" id="CLU_032784_4_2_6"/>
<dbReference type="UniPathway" id="UPA00068">
    <property type="reaction ID" value="UER00113"/>
</dbReference>
<dbReference type="Proteomes" id="UP000001857">
    <property type="component" value="Chromosome I"/>
</dbReference>
<dbReference type="GO" id="GO:0005737">
    <property type="term" value="C:cytoplasm"/>
    <property type="evidence" value="ECO:0007669"/>
    <property type="project" value="UniProtKB-SubCell"/>
</dbReference>
<dbReference type="GO" id="GO:0004055">
    <property type="term" value="F:argininosuccinate synthase activity"/>
    <property type="evidence" value="ECO:0007669"/>
    <property type="project" value="UniProtKB-UniRule"/>
</dbReference>
<dbReference type="GO" id="GO:0005524">
    <property type="term" value="F:ATP binding"/>
    <property type="evidence" value="ECO:0007669"/>
    <property type="project" value="UniProtKB-UniRule"/>
</dbReference>
<dbReference type="GO" id="GO:0000053">
    <property type="term" value="P:argininosuccinate metabolic process"/>
    <property type="evidence" value="ECO:0007669"/>
    <property type="project" value="TreeGrafter"/>
</dbReference>
<dbReference type="GO" id="GO:0006526">
    <property type="term" value="P:L-arginine biosynthetic process"/>
    <property type="evidence" value="ECO:0007669"/>
    <property type="project" value="UniProtKB-UniRule"/>
</dbReference>
<dbReference type="GO" id="GO:0000050">
    <property type="term" value="P:urea cycle"/>
    <property type="evidence" value="ECO:0007669"/>
    <property type="project" value="TreeGrafter"/>
</dbReference>
<dbReference type="CDD" id="cd01999">
    <property type="entry name" value="ASS"/>
    <property type="match status" value="1"/>
</dbReference>
<dbReference type="FunFam" id="3.40.50.620:FF:000019">
    <property type="entry name" value="Argininosuccinate synthase"/>
    <property type="match status" value="1"/>
</dbReference>
<dbReference type="FunFam" id="3.90.1260.10:FF:000007">
    <property type="entry name" value="Argininosuccinate synthase"/>
    <property type="match status" value="1"/>
</dbReference>
<dbReference type="Gene3D" id="3.90.1260.10">
    <property type="entry name" value="Argininosuccinate synthetase, chain A, domain 2"/>
    <property type="match status" value="1"/>
</dbReference>
<dbReference type="Gene3D" id="3.40.50.620">
    <property type="entry name" value="HUPs"/>
    <property type="match status" value="1"/>
</dbReference>
<dbReference type="Gene3D" id="1.20.5.470">
    <property type="entry name" value="Single helix bin"/>
    <property type="match status" value="1"/>
</dbReference>
<dbReference type="HAMAP" id="MF_00005">
    <property type="entry name" value="Arg_succ_synth_type1"/>
    <property type="match status" value="1"/>
</dbReference>
<dbReference type="InterPro" id="IPR048268">
    <property type="entry name" value="Arginosuc_syn_C"/>
</dbReference>
<dbReference type="InterPro" id="IPR048267">
    <property type="entry name" value="Arginosuc_syn_N"/>
</dbReference>
<dbReference type="InterPro" id="IPR001518">
    <property type="entry name" value="Arginosuc_synth"/>
</dbReference>
<dbReference type="InterPro" id="IPR018223">
    <property type="entry name" value="Arginosuc_synth_CS"/>
</dbReference>
<dbReference type="InterPro" id="IPR023434">
    <property type="entry name" value="Arginosuc_synth_type_1_subfam"/>
</dbReference>
<dbReference type="InterPro" id="IPR024074">
    <property type="entry name" value="AS_cat/multimer_dom_body"/>
</dbReference>
<dbReference type="InterPro" id="IPR014729">
    <property type="entry name" value="Rossmann-like_a/b/a_fold"/>
</dbReference>
<dbReference type="NCBIfam" id="TIGR00032">
    <property type="entry name" value="argG"/>
    <property type="match status" value="1"/>
</dbReference>
<dbReference type="NCBIfam" id="NF001770">
    <property type="entry name" value="PRK00509.1"/>
    <property type="match status" value="1"/>
</dbReference>
<dbReference type="PANTHER" id="PTHR11587">
    <property type="entry name" value="ARGININOSUCCINATE SYNTHASE"/>
    <property type="match status" value="1"/>
</dbReference>
<dbReference type="PANTHER" id="PTHR11587:SF2">
    <property type="entry name" value="ARGININOSUCCINATE SYNTHASE"/>
    <property type="match status" value="1"/>
</dbReference>
<dbReference type="Pfam" id="PF20979">
    <property type="entry name" value="Arginosuc_syn_C"/>
    <property type="match status" value="1"/>
</dbReference>
<dbReference type="Pfam" id="PF00764">
    <property type="entry name" value="Arginosuc_synth"/>
    <property type="match status" value="1"/>
</dbReference>
<dbReference type="SUPFAM" id="SSF52402">
    <property type="entry name" value="Adenine nucleotide alpha hydrolases-like"/>
    <property type="match status" value="1"/>
</dbReference>
<dbReference type="SUPFAM" id="SSF69864">
    <property type="entry name" value="Argininosuccinate synthetase, C-terminal domain"/>
    <property type="match status" value="1"/>
</dbReference>
<dbReference type="PROSITE" id="PS00564">
    <property type="entry name" value="ARGININOSUCCIN_SYN_1"/>
    <property type="match status" value="1"/>
</dbReference>
<dbReference type="PROSITE" id="PS00565">
    <property type="entry name" value="ARGININOSUCCIN_SYN_2"/>
    <property type="match status" value="1"/>
</dbReference>
<protein>
    <recommendedName>
        <fullName evidence="1">Argininosuccinate synthase</fullName>
        <ecNumber evidence="1">6.3.4.5</ecNumber>
    </recommendedName>
    <alternativeName>
        <fullName evidence="1">Citrulline--aspartate ligase</fullName>
    </alternativeName>
</protein>
<evidence type="ECO:0000255" key="1">
    <source>
        <dbReference type="HAMAP-Rule" id="MF_00005"/>
    </source>
</evidence>
<reference key="1">
    <citation type="submission" date="2008-08" db="EMBL/GenBank/DDBJ databases">
        <title>Complete sequence of Vibrio fischeri strain MJ11.</title>
        <authorList>
            <person name="Mandel M.J."/>
            <person name="Stabb E.V."/>
            <person name="Ruby E.G."/>
            <person name="Ferriera S."/>
            <person name="Johnson J."/>
            <person name="Kravitz S."/>
            <person name="Beeson K."/>
            <person name="Sutton G."/>
            <person name="Rogers Y.-H."/>
            <person name="Friedman R."/>
            <person name="Frazier M."/>
            <person name="Venter J.C."/>
        </authorList>
    </citation>
    <scope>NUCLEOTIDE SEQUENCE [LARGE SCALE GENOMIC DNA]</scope>
    <source>
        <strain>MJ11</strain>
    </source>
</reference>
<organism>
    <name type="scientific">Aliivibrio fischeri (strain MJ11)</name>
    <name type="common">Vibrio fischeri</name>
    <dbReference type="NCBI Taxonomy" id="388396"/>
    <lineage>
        <taxon>Bacteria</taxon>
        <taxon>Pseudomonadati</taxon>
        <taxon>Pseudomonadota</taxon>
        <taxon>Gammaproteobacteria</taxon>
        <taxon>Vibrionales</taxon>
        <taxon>Vibrionaceae</taxon>
        <taxon>Aliivibrio</taxon>
    </lineage>
</organism>
<sequence>MSKKVEVNKVVVAYSGGLDTSVIIPWLKENYNCEVIAFVADVGQGEEELEGIEAKAIASGATECYIADLKEEMVSEYIFPTLKTGALYEGKYLLGTSMARPIIAKAQVEVARNVGADALCHGCTGKGNDQIRFEGAFAALAPDLHVIAPWREWDLVSREECLDYLAERNIPCTASLTKIYSRDANAWHISTEGGVLEETWNAPNDDCWAWTVDPEQAPNESETISLKVEKGAVVAVDGKAMTPYEVVVYLNEKGAKHGVGRIDIVENRLVGMKSRGCYETPGGTIINEALRAVEQLVLDKTSFEFREELGIKASHLVYDGRWFTPLCKSILAASEELAKDVNGEVVIKLYKGHATVIQKRSDNSLYSEEFATFGADEVYDQSHAEGFIRLYSLSSRIRALNSK</sequence>
<feature type="chain" id="PRO_1000089060" description="Argininosuccinate synthase">
    <location>
        <begin position="1"/>
        <end position="403"/>
    </location>
</feature>
<feature type="binding site" evidence="1">
    <location>
        <begin position="13"/>
        <end position="21"/>
    </location>
    <ligand>
        <name>ATP</name>
        <dbReference type="ChEBI" id="CHEBI:30616"/>
    </ligand>
</feature>
<feature type="binding site" evidence="1">
    <location>
        <position position="40"/>
    </location>
    <ligand>
        <name>ATP</name>
        <dbReference type="ChEBI" id="CHEBI:30616"/>
    </ligand>
</feature>
<feature type="binding site" evidence="1">
    <location>
        <position position="92"/>
    </location>
    <ligand>
        <name>L-citrulline</name>
        <dbReference type="ChEBI" id="CHEBI:57743"/>
    </ligand>
</feature>
<feature type="binding site" evidence="1">
    <location>
        <position position="97"/>
    </location>
    <ligand>
        <name>L-citrulline</name>
        <dbReference type="ChEBI" id="CHEBI:57743"/>
    </ligand>
</feature>
<feature type="binding site" evidence="1">
    <location>
        <position position="122"/>
    </location>
    <ligand>
        <name>ATP</name>
        <dbReference type="ChEBI" id="CHEBI:30616"/>
    </ligand>
</feature>
<feature type="binding site" evidence="1">
    <location>
        <position position="124"/>
    </location>
    <ligand>
        <name>L-aspartate</name>
        <dbReference type="ChEBI" id="CHEBI:29991"/>
    </ligand>
</feature>
<feature type="binding site" evidence="1">
    <location>
        <position position="128"/>
    </location>
    <ligand>
        <name>L-aspartate</name>
        <dbReference type="ChEBI" id="CHEBI:29991"/>
    </ligand>
</feature>
<feature type="binding site" evidence="1">
    <location>
        <position position="128"/>
    </location>
    <ligand>
        <name>L-citrulline</name>
        <dbReference type="ChEBI" id="CHEBI:57743"/>
    </ligand>
</feature>
<feature type="binding site" evidence="1">
    <location>
        <position position="129"/>
    </location>
    <ligand>
        <name>L-aspartate</name>
        <dbReference type="ChEBI" id="CHEBI:29991"/>
    </ligand>
</feature>
<feature type="binding site" evidence="1">
    <location>
        <position position="132"/>
    </location>
    <ligand>
        <name>L-citrulline</name>
        <dbReference type="ChEBI" id="CHEBI:57743"/>
    </ligand>
</feature>
<feature type="binding site" evidence="1">
    <location>
        <position position="181"/>
    </location>
    <ligand>
        <name>L-citrulline</name>
        <dbReference type="ChEBI" id="CHEBI:57743"/>
    </ligand>
</feature>
<feature type="binding site" evidence="1">
    <location>
        <position position="190"/>
    </location>
    <ligand>
        <name>L-citrulline</name>
        <dbReference type="ChEBI" id="CHEBI:57743"/>
    </ligand>
</feature>
<feature type="binding site" evidence="1">
    <location>
        <position position="266"/>
    </location>
    <ligand>
        <name>L-citrulline</name>
        <dbReference type="ChEBI" id="CHEBI:57743"/>
    </ligand>
</feature>
<feature type="binding site" evidence="1">
    <location>
        <position position="278"/>
    </location>
    <ligand>
        <name>L-citrulline</name>
        <dbReference type="ChEBI" id="CHEBI:57743"/>
    </ligand>
</feature>
<name>ASSY_ALIFM</name>